<gene>
    <name evidence="1" type="primary">darP</name>
    <name type="ordered locus">XAC2766</name>
</gene>
<proteinExistence type="inferred from homology"/>
<feature type="chain" id="PRO_0000208235" description="Dual-action ribosomal maturation protein DarP">
    <location>
        <begin position="1"/>
        <end position="193"/>
    </location>
</feature>
<feature type="region of interest" description="Disordered" evidence="2">
    <location>
        <begin position="1"/>
        <end position="20"/>
    </location>
</feature>
<feature type="region of interest" description="Disordered" evidence="2">
    <location>
        <begin position="171"/>
        <end position="193"/>
    </location>
</feature>
<feature type="compositionally biased region" description="Basic and acidic residues" evidence="2">
    <location>
        <begin position="1"/>
        <end position="10"/>
    </location>
</feature>
<feature type="compositionally biased region" description="Acidic residues" evidence="2">
    <location>
        <begin position="178"/>
        <end position="193"/>
    </location>
</feature>
<evidence type="ECO:0000255" key="1">
    <source>
        <dbReference type="HAMAP-Rule" id="MF_00765"/>
    </source>
</evidence>
<evidence type="ECO:0000256" key="2">
    <source>
        <dbReference type="SAM" id="MobiDB-lite"/>
    </source>
</evidence>
<evidence type="ECO:0000305" key="3"/>
<accession>Q8PIX9</accession>
<organism>
    <name type="scientific">Xanthomonas axonopodis pv. citri (strain 306)</name>
    <dbReference type="NCBI Taxonomy" id="190486"/>
    <lineage>
        <taxon>Bacteria</taxon>
        <taxon>Pseudomonadati</taxon>
        <taxon>Pseudomonadota</taxon>
        <taxon>Gammaproteobacteria</taxon>
        <taxon>Lysobacterales</taxon>
        <taxon>Lysobacteraceae</taxon>
        <taxon>Xanthomonas</taxon>
    </lineage>
</organism>
<comment type="function">
    <text evidence="1">Member of a network of 50S ribosomal subunit biogenesis factors which assembles along the 30S-50S interface, preventing incorrect 23S rRNA structures from forming. Promotes peptidyl transferase center (PTC) maturation.</text>
</comment>
<comment type="subcellular location">
    <subcellularLocation>
        <location evidence="1">Cytoplasm</location>
    </subcellularLocation>
    <text evidence="1">Associates with late stage pre-50S ribosomal subunits.</text>
</comment>
<comment type="similarity">
    <text evidence="1">Belongs to the DarP family.</text>
</comment>
<comment type="sequence caution" evidence="3">
    <conflict type="erroneous initiation">
        <sequence resource="EMBL-CDS" id="AAM37611"/>
    </conflict>
    <text>Extended N-terminus.</text>
</comment>
<dbReference type="EMBL" id="AE008923">
    <property type="protein sequence ID" value="AAM37611.1"/>
    <property type="status" value="ALT_INIT"/>
    <property type="molecule type" value="Genomic_DNA"/>
</dbReference>
<dbReference type="SMR" id="Q8PIX9"/>
<dbReference type="KEGG" id="xac:XAC2766"/>
<dbReference type="eggNOG" id="COG3028">
    <property type="taxonomic scope" value="Bacteria"/>
</dbReference>
<dbReference type="HOGENOM" id="CLU_106757_0_0_6"/>
<dbReference type="Proteomes" id="UP000000576">
    <property type="component" value="Chromosome"/>
</dbReference>
<dbReference type="GO" id="GO:0005829">
    <property type="term" value="C:cytosol"/>
    <property type="evidence" value="ECO:0007669"/>
    <property type="project" value="TreeGrafter"/>
</dbReference>
<dbReference type="GO" id="GO:0043022">
    <property type="term" value="F:ribosome binding"/>
    <property type="evidence" value="ECO:0007669"/>
    <property type="project" value="UniProtKB-UniRule"/>
</dbReference>
<dbReference type="GO" id="GO:0019843">
    <property type="term" value="F:rRNA binding"/>
    <property type="evidence" value="ECO:0007669"/>
    <property type="project" value="UniProtKB-UniRule"/>
</dbReference>
<dbReference type="GO" id="GO:1902626">
    <property type="term" value="P:assembly of large subunit precursor of preribosome"/>
    <property type="evidence" value="ECO:0007669"/>
    <property type="project" value="UniProtKB-UniRule"/>
</dbReference>
<dbReference type="CDD" id="cd16331">
    <property type="entry name" value="YjgA-like"/>
    <property type="match status" value="1"/>
</dbReference>
<dbReference type="FunFam" id="1.10.60.30:FF:000002">
    <property type="entry name" value="UPF0307 protein YjgA"/>
    <property type="match status" value="1"/>
</dbReference>
<dbReference type="Gene3D" id="1.10.60.30">
    <property type="entry name" value="PSPTO4464-like domains"/>
    <property type="match status" value="2"/>
</dbReference>
<dbReference type="HAMAP" id="MF_00765">
    <property type="entry name" value="DarP"/>
    <property type="match status" value="1"/>
</dbReference>
<dbReference type="InterPro" id="IPR006839">
    <property type="entry name" value="DarP"/>
</dbReference>
<dbReference type="InterPro" id="IPR023153">
    <property type="entry name" value="DarP_sf"/>
</dbReference>
<dbReference type="NCBIfam" id="NF003593">
    <property type="entry name" value="PRK05255.1-1"/>
    <property type="match status" value="1"/>
</dbReference>
<dbReference type="PANTHER" id="PTHR38101">
    <property type="entry name" value="UPF0307 PROTEIN YJGA"/>
    <property type="match status" value="1"/>
</dbReference>
<dbReference type="PANTHER" id="PTHR38101:SF1">
    <property type="entry name" value="UPF0307 PROTEIN YJGA"/>
    <property type="match status" value="1"/>
</dbReference>
<dbReference type="Pfam" id="PF04751">
    <property type="entry name" value="DarP"/>
    <property type="match status" value="1"/>
</dbReference>
<dbReference type="PIRSF" id="PIRSF016183">
    <property type="entry name" value="UCP016183"/>
    <property type="match status" value="1"/>
</dbReference>
<dbReference type="SUPFAM" id="SSF158710">
    <property type="entry name" value="PSPTO4464-like"/>
    <property type="match status" value="1"/>
</dbReference>
<reference key="1">
    <citation type="journal article" date="2002" name="Nature">
        <title>Comparison of the genomes of two Xanthomonas pathogens with differing host specificities.</title>
        <authorList>
            <person name="da Silva A.C.R."/>
            <person name="Ferro J.A."/>
            <person name="Reinach F.C."/>
            <person name="Farah C.S."/>
            <person name="Furlan L.R."/>
            <person name="Quaggio R.B."/>
            <person name="Monteiro-Vitorello C.B."/>
            <person name="Van Sluys M.A."/>
            <person name="Almeida N.F. Jr."/>
            <person name="Alves L.M.C."/>
            <person name="do Amaral A.M."/>
            <person name="Bertolini M.C."/>
            <person name="Camargo L.E.A."/>
            <person name="Camarotte G."/>
            <person name="Cannavan F."/>
            <person name="Cardozo J."/>
            <person name="Chambergo F."/>
            <person name="Ciapina L.P."/>
            <person name="Cicarelli R.M.B."/>
            <person name="Coutinho L.L."/>
            <person name="Cursino-Santos J.R."/>
            <person name="El-Dorry H."/>
            <person name="Faria J.B."/>
            <person name="Ferreira A.J.S."/>
            <person name="Ferreira R.C.C."/>
            <person name="Ferro M.I.T."/>
            <person name="Formighieri E.F."/>
            <person name="Franco M.C."/>
            <person name="Greggio C.C."/>
            <person name="Gruber A."/>
            <person name="Katsuyama A.M."/>
            <person name="Kishi L.T."/>
            <person name="Leite R.P."/>
            <person name="Lemos E.G.M."/>
            <person name="Lemos M.V.F."/>
            <person name="Locali E.C."/>
            <person name="Machado M.A."/>
            <person name="Madeira A.M.B.N."/>
            <person name="Martinez-Rossi N.M."/>
            <person name="Martins E.C."/>
            <person name="Meidanis J."/>
            <person name="Menck C.F.M."/>
            <person name="Miyaki C.Y."/>
            <person name="Moon D.H."/>
            <person name="Moreira L.M."/>
            <person name="Novo M.T.M."/>
            <person name="Okura V.K."/>
            <person name="Oliveira M.C."/>
            <person name="Oliveira V.R."/>
            <person name="Pereira H.A."/>
            <person name="Rossi A."/>
            <person name="Sena J.A.D."/>
            <person name="Silva C."/>
            <person name="de Souza R.F."/>
            <person name="Spinola L.A.F."/>
            <person name="Takita M.A."/>
            <person name="Tamura R.E."/>
            <person name="Teixeira E.C."/>
            <person name="Tezza R.I.D."/>
            <person name="Trindade dos Santos M."/>
            <person name="Truffi D."/>
            <person name="Tsai S.M."/>
            <person name="White F.F."/>
            <person name="Setubal J.C."/>
            <person name="Kitajima J.P."/>
        </authorList>
    </citation>
    <scope>NUCLEOTIDE SEQUENCE [LARGE SCALE GENOMIC DNA]</scope>
    <source>
        <strain>306</strain>
    </source>
</reference>
<keyword id="KW-0963">Cytoplasm</keyword>
<keyword id="KW-0690">Ribosome biogenesis</keyword>
<keyword id="KW-0694">RNA-binding</keyword>
<keyword id="KW-0699">rRNA-binding</keyword>
<protein>
    <recommendedName>
        <fullName evidence="1">Dual-action ribosomal maturation protein DarP</fullName>
    </recommendedName>
    <alternativeName>
        <fullName evidence="1">Large ribosomal subunit assembly factor DarP</fullName>
    </alternativeName>
</protein>
<name>DARP_XANAC</name>
<sequence length="193" mass="22034">MRGRDEETGEFRGASRSQQRREALEIFDLGEKLVALTPAQLAKLPVPESLIPHIEESKRITSHIAHKRQLAFLAKHMRREDEQTLAAIRDALDANSDTARREVAAIHRVERWRERLLAEGDVALAELLEAYPAADRQQLRQLVRNAIHERAKNKPPRAYRELFQVLRDLSQEQGLESGDSELEDGESASEDDE</sequence>